<comment type="function">
    <text evidence="2">Molybdo-flavoprotein enzyme complex involved in nicotine degradation. The subunit gamma (large subunit) contains the substrate-binding sites, the subunit alpha (medium subunit) binds FAD and the subunit beta (small subunit) has a 2Fe-2S ferredoxin-type domain which binds 2 2Fe-2S clusters.</text>
</comment>
<comment type="catalytic activity">
    <reaction>
        <text>6-hydroxypseudooxynicotine + A + H2O = 2,6-dihydroxypseudooxynicotine + AH2</text>
        <dbReference type="Rhea" id="RHEA:34223"/>
        <dbReference type="ChEBI" id="CHEBI:13193"/>
        <dbReference type="ChEBI" id="CHEBI:15377"/>
        <dbReference type="ChEBI" id="CHEBI:17499"/>
        <dbReference type="ChEBI" id="CHEBI:58682"/>
        <dbReference type="ChEBI" id="CHEBI:66944"/>
        <dbReference type="EC" id="1.5.99.14"/>
    </reaction>
</comment>
<comment type="cofactor">
    <cofactor evidence="2">
        <name>[2Fe-2S] cluster</name>
        <dbReference type="ChEBI" id="CHEBI:190135"/>
    </cofactor>
    <text evidence="2">Binds 2 [2Fe-2S] clusters.</text>
</comment>
<comment type="pathway">
    <text>Alkaloid degradation; nicotine degradation.</text>
</comment>
<comment type="subunit">
    <text evidence="3">Heterohexamer of 2 alpha (kdhA), 2 beta (kdhB) and 2 gamma (kdhC) subunit. Dimer of heterotrimers (Probable).</text>
</comment>
<dbReference type="EC" id="1.5.99.14"/>
<dbReference type="EMBL" id="AF373840">
    <property type="protein sequence ID" value="AAK64247.1"/>
    <property type="molecule type" value="Genomic_DNA"/>
</dbReference>
<dbReference type="EMBL" id="AJ001137">
    <property type="protein sequence ID" value="CAA04551.1"/>
    <property type="molecule type" value="Genomic_DNA"/>
</dbReference>
<dbReference type="EMBL" id="AJ507836">
    <property type="protein sequence ID" value="CAD47946.1"/>
    <property type="molecule type" value="Genomic_DNA"/>
</dbReference>
<dbReference type="RefSeq" id="WP_016359457.1">
    <property type="nucleotide sequence ID" value="NZ_JAGINZ010000002.1"/>
</dbReference>
<dbReference type="RefSeq" id="YP_007988772.1">
    <property type="nucleotide sequence ID" value="NC_021229.1"/>
</dbReference>
<dbReference type="PDB" id="7DQX">
    <property type="method" value="X-ray"/>
    <property type="resolution" value="3.44 A"/>
    <property type="chains" value="C/F=1-160"/>
</dbReference>
<dbReference type="PDBsum" id="7DQX"/>
<dbReference type="SMR" id="O87682"/>
<dbReference type="GeneID" id="84020291"/>
<dbReference type="KEGG" id="ag:CAA04551"/>
<dbReference type="BioCyc" id="MetaCyc:MONOMER-982"/>
<dbReference type="UniPathway" id="UPA00106"/>
<dbReference type="GO" id="GO:0051537">
    <property type="term" value="F:2 iron, 2 sulfur cluster binding"/>
    <property type="evidence" value="ECO:0007669"/>
    <property type="project" value="UniProtKB-KW"/>
</dbReference>
<dbReference type="GO" id="GO:0034909">
    <property type="term" value="F:6-hydroxypseudooxynicotine dehydrogenase activity"/>
    <property type="evidence" value="ECO:0007669"/>
    <property type="project" value="UniProtKB-EC"/>
</dbReference>
<dbReference type="GO" id="GO:0046872">
    <property type="term" value="F:metal ion binding"/>
    <property type="evidence" value="ECO:0007669"/>
    <property type="project" value="UniProtKB-KW"/>
</dbReference>
<dbReference type="GO" id="GO:0019608">
    <property type="term" value="P:nicotine catabolic process"/>
    <property type="evidence" value="ECO:0007669"/>
    <property type="project" value="UniProtKB-UniPathway"/>
</dbReference>
<dbReference type="CDD" id="cd00207">
    <property type="entry name" value="fer2"/>
    <property type="match status" value="1"/>
</dbReference>
<dbReference type="FunFam" id="3.10.20.30:FF:000020">
    <property type="entry name" value="Xanthine dehydrogenase iron-sulfur subunit"/>
    <property type="match status" value="1"/>
</dbReference>
<dbReference type="Gene3D" id="3.10.20.30">
    <property type="match status" value="1"/>
</dbReference>
<dbReference type="Gene3D" id="1.10.150.120">
    <property type="entry name" value="[2Fe-2S]-binding domain"/>
    <property type="match status" value="1"/>
</dbReference>
<dbReference type="InterPro" id="IPR002888">
    <property type="entry name" value="2Fe-2S-bd"/>
</dbReference>
<dbReference type="InterPro" id="IPR036884">
    <property type="entry name" value="2Fe-2S-bd_dom_sf"/>
</dbReference>
<dbReference type="InterPro" id="IPR036010">
    <property type="entry name" value="2Fe-2S_ferredoxin-like_sf"/>
</dbReference>
<dbReference type="InterPro" id="IPR001041">
    <property type="entry name" value="2Fe-2S_ferredoxin-type"/>
</dbReference>
<dbReference type="InterPro" id="IPR006058">
    <property type="entry name" value="2Fe2S_fd_BS"/>
</dbReference>
<dbReference type="InterPro" id="IPR012675">
    <property type="entry name" value="Beta-grasp_dom_sf"/>
</dbReference>
<dbReference type="InterPro" id="IPR051452">
    <property type="entry name" value="Diverse_Oxidoreductases"/>
</dbReference>
<dbReference type="PANTHER" id="PTHR44379">
    <property type="entry name" value="OXIDOREDUCTASE WITH IRON-SULFUR SUBUNIT"/>
    <property type="match status" value="1"/>
</dbReference>
<dbReference type="PANTHER" id="PTHR44379:SF5">
    <property type="entry name" value="OXIDOREDUCTASE WITH IRON-SULFUR SUBUNIT"/>
    <property type="match status" value="1"/>
</dbReference>
<dbReference type="Pfam" id="PF00111">
    <property type="entry name" value="Fer2"/>
    <property type="match status" value="1"/>
</dbReference>
<dbReference type="Pfam" id="PF01799">
    <property type="entry name" value="Fer2_2"/>
    <property type="match status" value="1"/>
</dbReference>
<dbReference type="SUPFAM" id="SSF54292">
    <property type="entry name" value="2Fe-2S ferredoxin-like"/>
    <property type="match status" value="1"/>
</dbReference>
<dbReference type="SUPFAM" id="SSF47741">
    <property type="entry name" value="CO dehydrogenase ISP C-domain like"/>
    <property type="match status" value="1"/>
</dbReference>
<dbReference type="PROSITE" id="PS00197">
    <property type="entry name" value="2FE2S_FER_1"/>
    <property type="match status" value="1"/>
</dbReference>
<dbReference type="PROSITE" id="PS51085">
    <property type="entry name" value="2FE2S_FER_2"/>
    <property type="match status" value="1"/>
</dbReference>
<evidence type="ECO:0000255" key="1">
    <source>
        <dbReference type="PROSITE-ProRule" id="PRU00465"/>
    </source>
</evidence>
<evidence type="ECO:0000269" key="2">
    <source>
    </source>
</evidence>
<evidence type="ECO:0000305" key="3">
    <source>
    </source>
</evidence>
<evidence type="ECO:0007829" key="4">
    <source>
        <dbReference type="PDB" id="7DQX"/>
    </source>
</evidence>
<sequence length="160" mass="17639">MNAFRLTVEVNGVTHATDVEPRRLLADFLRDDLHLRGTRVGCEHGVCGSCTVLLDGQPVRSCTVLAVQANNSRIETVESLQKDGQLHPLQRSFSKCHALQCGFCTSGFLMTLKPLYDDEDVTLDATSAREAISGNICRCTGYQQIVEATVDAFHCRDHND</sequence>
<protein>
    <recommendedName>
        <fullName>6-hydroxypseudooxynicotine dehydrogenase complex subunit beta</fullName>
        <ecNumber>1.5.99.14</ecNumber>
    </recommendedName>
    <alternativeName>
        <fullName>Ketone dehydrogenase small FeS subunit</fullName>
    </alternativeName>
</protein>
<accession>O87682</accession>
<geneLocation type="plasmid">
    <name>pAO1</name>
</geneLocation>
<proteinExistence type="evidence at protein level"/>
<name>KDHB_PAENI</name>
<reference key="1">
    <citation type="journal article" date="1998" name="J. Mol. Biol.">
        <title>Gene structures and properties of enzymes of the plasmid-encoded nicotine catabolism of Arthrobacter nicotinovorans.</title>
        <authorList>
            <person name="Schenk S."/>
            <person name="Hoelz A."/>
            <person name="Kraus B."/>
            <person name="Decker K."/>
        </authorList>
    </citation>
    <scope>NUCLEOTIDE SEQUENCE [GENOMIC DNA]</scope>
    <scope>PROTEIN SEQUENCE OF 2-15</scope>
    <scope>FUNCTION</scope>
    <scope>COFACTOR</scope>
    <scope>SUBUNIT</scope>
</reference>
<reference key="2">
    <citation type="journal article" date="2001" name="J. Bacteriol.">
        <title>Gene cluster on pAO1 of Arthrobacter nicotinovorans involved in degradation of the plant alkaloid nicotine: cloning, purification, and characterization of 2,6-dihydroxypyridine 3-hydroxylase.</title>
        <authorList>
            <person name="Baitsch D."/>
            <person name="Sandu C."/>
            <person name="Brandsch R."/>
            <person name="Igloi G.L."/>
        </authorList>
    </citation>
    <scope>NUCLEOTIDE SEQUENCE [GENOMIC DNA]</scope>
</reference>
<reference key="3">
    <citation type="journal article" date="2003" name="J. Bacteriol.">
        <title>Sequence of the 165-kilobase catabolic plasmid pAO1 from Arthrobacter nicotinovorans and identification of a pAO1-dependent nicotine uptake system.</title>
        <authorList>
            <person name="Igloi G.L."/>
            <person name="Brandsch R."/>
        </authorList>
    </citation>
    <scope>NUCLEOTIDE SEQUENCE [GENOMIC DNA]</scope>
</reference>
<organism>
    <name type="scientific">Paenarthrobacter nicotinovorans</name>
    <name type="common">Arthrobacter nicotinovorans</name>
    <dbReference type="NCBI Taxonomy" id="29320"/>
    <lineage>
        <taxon>Bacteria</taxon>
        <taxon>Bacillati</taxon>
        <taxon>Actinomycetota</taxon>
        <taxon>Actinomycetes</taxon>
        <taxon>Micrococcales</taxon>
        <taxon>Micrococcaceae</taxon>
        <taxon>Paenarthrobacter</taxon>
    </lineage>
</organism>
<gene>
    <name type="primary">kdhB</name>
    <name type="synonym">kdhS</name>
</gene>
<keyword id="KW-0001">2Fe-2S</keyword>
<keyword id="KW-0002">3D-structure</keyword>
<keyword id="KW-0903">Direct protein sequencing</keyword>
<keyword id="KW-0408">Iron</keyword>
<keyword id="KW-0411">Iron-sulfur</keyword>
<keyword id="KW-0479">Metal-binding</keyword>
<keyword id="KW-0560">Oxidoreductase</keyword>
<keyword id="KW-0614">Plasmid</keyword>
<feature type="initiator methionine" description="Removed" evidence="2">
    <location>
        <position position="1"/>
    </location>
</feature>
<feature type="chain" id="PRO_0000424216" description="6-hydroxypseudooxynicotine dehydrogenase complex subunit beta">
    <location>
        <begin position="2"/>
        <end position="160"/>
    </location>
</feature>
<feature type="domain" description="2Fe-2S ferredoxin-type" evidence="1">
    <location>
        <begin position="4"/>
        <end position="80"/>
    </location>
</feature>
<feature type="binding site" evidence="1">
    <location>
        <position position="42"/>
    </location>
    <ligand>
        <name>[2Fe-2S] cluster</name>
        <dbReference type="ChEBI" id="CHEBI:190135"/>
        <label>1</label>
    </ligand>
</feature>
<feature type="binding site" evidence="1">
    <location>
        <position position="47"/>
    </location>
    <ligand>
        <name>[2Fe-2S] cluster</name>
        <dbReference type="ChEBI" id="CHEBI:190135"/>
        <label>1</label>
    </ligand>
</feature>
<feature type="binding site" evidence="1">
    <location>
        <position position="50"/>
    </location>
    <ligand>
        <name>[2Fe-2S] cluster</name>
        <dbReference type="ChEBI" id="CHEBI:190135"/>
        <label>1</label>
    </ligand>
</feature>
<feature type="binding site" evidence="1">
    <location>
        <position position="62"/>
    </location>
    <ligand>
        <name>[2Fe-2S] cluster</name>
        <dbReference type="ChEBI" id="CHEBI:190135"/>
        <label>1</label>
    </ligand>
</feature>
<feature type="binding site" evidence="1">
    <location>
        <position position="101"/>
    </location>
    <ligand>
        <name>[2Fe-2S] cluster</name>
        <dbReference type="ChEBI" id="CHEBI:190135"/>
        <label>2</label>
    </ligand>
</feature>
<feature type="binding site" evidence="1">
    <location>
        <position position="104"/>
    </location>
    <ligand>
        <name>[2Fe-2S] cluster</name>
        <dbReference type="ChEBI" id="CHEBI:190135"/>
        <label>2</label>
    </ligand>
</feature>
<feature type="binding site" evidence="1">
    <location>
        <position position="137"/>
    </location>
    <ligand>
        <name>[2Fe-2S] cluster</name>
        <dbReference type="ChEBI" id="CHEBI:190135"/>
        <label>2</label>
    </ligand>
</feature>
<feature type="binding site" evidence="1">
    <location>
        <position position="139"/>
    </location>
    <ligand>
        <name>[2Fe-2S] cluster</name>
        <dbReference type="ChEBI" id="CHEBI:190135"/>
        <label>2</label>
    </ligand>
</feature>
<feature type="strand" evidence="4">
    <location>
        <begin position="4"/>
        <end position="10"/>
    </location>
</feature>
<feature type="strand" evidence="4">
    <location>
        <begin position="13"/>
        <end position="19"/>
    </location>
</feature>
<feature type="helix" evidence="4">
    <location>
        <begin position="25"/>
        <end position="30"/>
    </location>
</feature>
<feature type="strand" evidence="4">
    <location>
        <begin position="42"/>
        <end position="45"/>
    </location>
</feature>
<feature type="strand" evidence="4">
    <location>
        <begin position="51"/>
        <end position="54"/>
    </location>
</feature>
<feature type="strand" evidence="4">
    <location>
        <begin position="57"/>
        <end position="60"/>
    </location>
</feature>
<feature type="strand" evidence="4">
    <location>
        <begin position="63"/>
        <end position="65"/>
    </location>
</feature>
<feature type="helix" evidence="4">
    <location>
        <begin position="66"/>
        <end position="69"/>
    </location>
</feature>
<feature type="strand" evidence="4">
    <location>
        <begin position="73"/>
        <end position="75"/>
    </location>
</feature>
<feature type="helix" evidence="4">
    <location>
        <begin position="77"/>
        <end position="79"/>
    </location>
</feature>
<feature type="helix" evidence="4">
    <location>
        <begin position="88"/>
        <end position="95"/>
    </location>
</feature>
<feature type="strand" evidence="4">
    <location>
        <begin position="100"/>
        <end position="102"/>
    </location>
</feature>
<feature type="helix" evidence="4">
    <location>
        <begin position="103"/>
        <end position="105"/>
    </location>
</feature>
<feature type="helix" evidence="4">
    <location>
        <begin position="106"/>
        <end position="117"/>
    </location>
</feature>
<feature type="helix" evidence="4">
    <location>
        <begin position="125"/>
        <end position="132"/>
    </location>
</feature>
<feature type="strand" evidence="4">
    <location>
        <begin position="138"/>
        <end position="140"/>
    </location>
</feature>
<feature type="helix" evidence="4">
    <location>
        <begin position="143"/>
        <end position="154"/>
    </location>
</feature>
<feature type="turn" evidence="4">
    <location>
        <begin position="155"/>
        <end position="158"/>
    </location>
</feature>